<proteinExistence type="inferred from homology"/>
<feature type="chain" id="PRO_1000120484" description="UPF0149 protein YgfB">
    <location>
        <begin position="1"/>
        <end position="192"/>
    </location>
</feature>
<reference key="1">
    <citation type="journal article" date="2011" name="J. Bacteriol.">
        <title>Comparative genomics of 28 Salmonella enterica isolates: evidence for CRISPR-mediated adaptive sublineage evolution.</title>
        <authorList>
            <person name="Fricke W.F."/>
            <person name="Mammel M.K."/>
            <person name="McDermott P.F."/>
            <person name="Tartera C."/>
            <person name="White D.G."/>
            <person name="Leclerc J.E."/>
            <person name="Ravel J."/>
            <person name="Cebula T.A."/>
        </authorList>
    </citation>
    <scope>NUCLEOTIDE SEQUENCE [LARGE SCALE GENOMIC DNA]</scope>
    <source>
        <strain>CVM19633</strain>
    </source>
</reference>
<evidence type="ECO:0000255" key="1">
    <source>
        <dbReference type="HAMAP-Rule" id="MF_00346"/>
    </source>
</evidence>
<organism>
    <name type="scientific">Salmonella schwarzengrund (strain CVM19633)</name>
    <dbReference type="NCBI Taxonomy" id="439843"/>
    <lineage>
        <taxon>Bacteria</taxon>
        <taxon>Pseudomonadati</taxon>
        <taxon>Pseudomonadota</taxon>
        <taxon>Gammaproteobacteria</taxon>
        <taxon>Enterobacterales</taxon>
        <taxon>Enterobacteriaceae</taxon>
        <taxon>Salmonella</taxon>
    </lineage>
</organism>
<gene>
    <name evidence="1" type="primary">ygfB</name>
    <name type="ordered locus">SeSA_A3230</name>
</gene>
<comment type="similarity">
    <text evidence="1">Belongs to the UPF0149 family.</text>
</comment>
<sequence>MSIQNEMPGYNEMNRFLNQQGAGLTPAEMHGLISGMICGGNNDSSWQPLLHDLTNEGLAFGHELAQALRKMHAATSDALEDDGFLFQLYLPEGDDVSVFDRADALAGWVNHFLLGLGVTQPKLDKVTGETGEAIDDLRNIAQLGYDESEDQEELEMSLEEIIEYVRVAALLCHDTFTRQQPTAPEVRKPTLH</sequence>
<accession>B4TV29</accession>
<name>YGFB_SALSV</name>
<protein>
    <recommendedName>
        <fullName evidence="1">UPF0149 protein YgfB</fullName>
    </recommendedName>
</protein>
<dbReference type="EMBL" id="CP001127">
    <property type="protein sequence ID" value="ACF88880.1"/>
    <property type="molecule type" value="Genomic_DNA"/>
</dbReference>
<dbReference type="SMR" id="B4TV29"/>
<dbReference type="KEGG" id="sew:SeSA_A3230"/>
<dbReference type="HOGENOM" id="CLU_085336_1_0_6"/>
<dbReference type="Proteomes" id="UP000001865">
    <property type="component" value="Chromosome"/>
</dbReference>
<dbReference type="GO" id="GO:0005829">
    <property type="term" value="C:cytosol"/>
    <property type="evidence" value="ECO:0007669"/>
    <property type="project" value="TreeGrafter"/>
</dbReference>
<dbReference type="FunFam" id="1.20.120.740:FF:000001">
    <property type="entry name" value="UPF0149 protein YgfB"/>
    <property type="match status" value="1"/>
</dbReference>
<dbReference type="Gene3D" id="1.20.120.740">
    <property type="entry name" value="YgfB uncharacterised protein family UPF0149, PF03695"/>
    <property type="match status" value="1"/>
</dbReference>
<dbReference type="HAMAP" id="MF_00346">
    <property type="entry name" value="UPF0149"/>
    <property type="match status" value="1"/>
</dbReference>
<dbReference type="InterPro" id="IPR011978">
    <property type="entry name" value="YgfB-like"/>
</dbReference>
<dbReference type="InterPro" id="IPR036255">
    <property type="entry name" value="YgfB-like_sf"/>
</dbReference>
<dbReference type="NCBIfam" id="NF002477">
    <property type="entry name" value="PRK01736.1"/>
    <property type="match status" value="1"/>
</dbReference>
<dbReference type="NCBIfam" id="TIGR02292">
    <property type="entry name" value="ygfB_yecA"/>
    <property type="match status" value="1"/>
</dbReference>
<dbReference type="PANTHER" id="PTHR37528">
    <property type="entry name" value="UPF0149 PROTEIN YGFB"/>
    <property type="match status" value="1"/>
</dbReference>
<dbReference type="PANTHER" id="PTHR37528:SF1">
    <property type="entry name" value="UPF0149 PROTEIN YGFB"/>
    <property type="match status" value="1"/>
</dbReference>
<dbReference type="Pfam" id="PF03695">
    <property type="entry name" value="UPF0149"/>
    <property type="match status" value="1"/>
</dbReference>
<dbReference type="SUPFAM" id="SSF101327">
    <property type="entry name" value="YgfB-like"/>
    <property type="match status" value="1"/>
</dbReference>